<organism>
    <name type="scientific">Mesorhizobium japonicum (strain LMG 29417 / CECT 9101 / MAFF 303099)</name>
    <name type="common">Mesorhizobium loti (strain MAFF 303099)</name>
    <dbReference type="NCBI Taxonomy" id="266835"/>
    <lineage>
        <taxon>Bacteria</taxon>
        <taxon>Pseudomonadati</taxon>
        <taxon>Pseudomonadota</taxon>
        <taxon>Alphaproteobacteria</taxon>
        <taxon>Hyphomicrobiales</taxon>
        <taxon>Phyllobacteriaceae</taxon>
        <taxon>Mesorhizobium</taxon>
    </lineage>
</organism>
<accession>Q983H8</accession>
<proteinExistence type="inferred from homology"/>
<gene>
    <name evidence="1" type="primary">hutU</name>
    <name type="ordered locus">mlr8323</name>
</gene>
<evidence type="ECO:0000255" key="1">
    <source>
        <dbReference type="HAMAP-Rule" id="MF_00577"/>
    </source>
</evidence>
<comment type="function">
    <text evidence="1">Catalyzes the conversion of urocanate to 4-imidazolone-5-propionate.</text>
</comment>
<comment type="catalytic activity">
    <reaction evidence="1">
        <text>4-imidazolone-5-propanoate = trans-urocanate + H2O</text>
        <dbReference type="Rhea" id="RHEA:13101"/>
        <dbReference type="ChEBI" id="CHEBI:15377"/>
        <dbReference type="ChEBI" id="CHEBI:17771"/>
        <dbReference type="ChEBI" id="CHEBI:77893"/>
        <dbReference type="EC" id="4.2.1.49"/>
    </reaction>
</comment>
<comment type="cofactor">
    <cofactor evidence="1">
        <name>NAD(+)</name>
        <dbReference type="ChEBI" id="CHEBI:57540"/>
    </cofactor>
    <text evidence="1">Binds 1 NAD(+) per subunit.</text>
</comment>
<comment type="pathway">
    <text evidence="1">Amino-acid degradation; L-histidine degradation into L-glutamate; N-formimidoyl-L-glutamate from L-histidine: step 2/3.</text>
</comment>
<comment type="subcellular location">
    <subcellularLocation>
        <location evidence="1">Cytoplasm</location>
    </subcellularLocation>
</comment>
<comment type="similarity">
    <text evidence="1">Belongs to the urocanase family.</text>
</comment>
<dbReference type="EC" id="4.2.1.49" evidence="1"/>
<dbReference type="EMBL" id="BA000012">
    <property type="protein sequence ID" value="BAB53903.1"/>
    <property type="molecule type" value="Genomic_DNA"/>
</dbReference>
<dbReference type="SMR" id="Q983H8"/>
<dbReference type="KEGG" id="mlo:mlr8323"/>
<dbReference type="eggNOG" id="COG2987">
    <property type="taxonomic scope" value="Bacteria"/>
</dbReference>
<dbReference type="HOGENOM" id="CLU_018868_0_1_5"/>
<dbReference type="UniPathway" id="UPA00379">
    <property type="reaction ID" value="UER00550"/>
</dbReference>
<dbReference type="Proteomes" id="UP000000552">
    <property type="component" value="Chromosome"/>
</dbReference>
<dbReference type="GO" id="GO:0005737">
    <property type="term" value="C:cytoplasm"/>
    <property type="evidence" value="ECO:0007669"/>
    <property type="project" value="UniProtKB-SubCell"/>
</dbReference>
<dbReference type="GO" id="GO:0016153">
    <property type="term" value="F:urocanate hydratase activity"/>
    <property type="evidence" value="ECO:0007669"/>
    <property type="project" value="UniProtKB-UniRule"/>
</dbReference>
<dbReference type="GO" id="GO:0019556">
    <property type="term" value="P:L-histidine catabolic process to glutamate and formamide"/>
    <property type="evidence" value="ECO:0007669"/>
    <property type="project" value="UniProtKB-UniPathway"/>
</dbReference>
<dbReference type="GO" id="GO:0019557">
    <property type="term" value="P:L-histidine catabolic process to glutamate and formate"/>
    <property type="evidence" value="ECO:0007669"/>
    <property type="project" value="UniProtKB-UniPathway"/>
</dbReference>
<dbReference type="FunFam" id="3.40.50.10730:FF:000001">
    <property type="entry name" value="Urocanate hydratase"/>
    <property type="match status" value="1"/>
</dbReference>
<dbReference type="Gene3D" id="3.40.50.10730">
    <property type="entry name" value="Urocanase like domains"/>
    <property type="match status" value="1"/>
</dbReference>
<dbReference type="Gene3D" id="3.40.1770.10">
    <property type="entry name" value="Urocanase superfamily"/>
    <property type="match status" value="1"/>
</dbReference>
<dbReference type="HAMAP" id="MF_00577">
    <property type="entry name" value="HutU"/>
    <property type="match status" value="1"/>
</dbReference>
<dbReference type="InterPro" id="IPR055351">
    <property type="entry name" value="Urocanase"/>
</dbReference>
<dbReference type="InterPro" id="IPR023637">
    <property type="entry name" value="Urocanase-like"/>
</dbReference>
<dbReference type="InterPro" id="IPR035401">
    <property type="entry name" value="Urocanase_C"/>
</dbReference>
<dbReference type="InterPro" id="IPR038364">
    <property type="entry name" value="Urocanase_central_sf"/>
</dbReference>
<dbReference type="InterPro" id="IPR023636">
    <property type="entry name" value="Urocanase_CS"/>
</dbReference>
<dbReference type="InterPro" id="IPR035400">
    <property type="entry name" value="Urocanase_N"/>
</dbReference>
<dbReference type="InterPro" id="IPR035085">
    <property type="entry name" value="Urocanase_Rossmann-like"/>
</dbReference>
<dbReference type="InterPro" id="IPR036190">
    <property type="entry name" value="Urocanase_sf"/>
</dbReference>
<dbReference type="NCBIfam" id="TIGR01228">
    <property type="entry name" value="hutU"/>
    <property type="match status" value="1"/>
</dbReference>
<dbReference type="NCBIfam" id="NF003820">
    <property type="entry name" value="PRK05414.1"/>
    <property type="match status" value="1"/>
</dbReference>
<dbReference type="PANTHER" id="PTHR12216">
    <property type="entry name" value="UROCANATE HYDRATASE"/>
    <property type="match status" value="1"/>
</dbReference>
<dbReference type="PANTHER" id="PTHR12216:SF4">
    <property type="entry name" value="UROCANATE HYDRATASE"/>
    <property type="match status" value="1"/>
</dbReference>
<dbReference type="Pfam" id="PF01175">
    <property type="entry name" value="Urocanase"/>
    <property type="match status" value="1"/>
</dbReference>
<dbReference type="Pfam" id="PF17392">
    <property type="entry name" value="Urocanase_C"/>
    <property type="match status" value="1"/>
</dbReference>
<dbReference type="Pfam" id="PF17391">
    <property type="entry name" value="Urocanase_N"/>
    <property type="match status" value="1"/>
</dbReference>
<dbReference type="PIRSF" id="PIRSF001423">
    <property type="entry name" value="Urocanate_hydrat"/>
    <property type="match status" value="1"/>
</dbReference>
<dbReference type="SUPFAM" id="SSF111326">
    <property type="entry name" value="Urocanase"/>
    <property type="match status" value="1"/>
</dbReference>
<dbReference type="PROSITE" id="PS01233">
    <property type="entry name" value="UROCANASE"/>
    <property type="match status" value="1"/>
</dbReference>
<feature type="chain" id="PRO_0000207349" description="Urocanate hydratase">
    <location>
        <begin position="1"/>
        <end position="557"/>
    </location>
</feature>
<feature type="active site" evidence="1">
    <location>
        <position position="411"/>
    </location>
</feature>
<feature type="binding site" evidence="1">
    <location>
        <begin position="53"/>
        <end position="54"/>
    </location>
    <ligand>
        <name>NAD(+)</name>
        <dbReference type="ChEBI" id="CHEBI:57540"/>
    </ligand>
</feature>
<feature type="binding site" evidence="1">
    <location>
        <position position="131"/>
    </location>
    <ligand>
        <name>NAD(+)</name>
        <dbReference type="ChEBI" id="CHEBI:57540"/>
    </ligand>
</feature>
<feature type="binding site" evidence="1">
    <location>
        <begin position="177"/>
        <end position="179"/>
    </location>
    <ligand>
        <name>NAD(+)</name>
        <dbReference type="ChEBI" id="CHEBI:57540"/>
    </ligand>
</feature>
<feature type="binding site" evidence="1">
    <location>
        <position position="197"/>
    </location>
    <ligand>
        <name>NAD(+)</name>
        <dbReference type="ChEBI" id="CHEBI:57540"/>
    </ligand>
</feature>
<feature type="binding site" evidence="1">
    <location>
        <begin position="243"/>
        <end position="244"/>
    </location>
    <ligand>
        <name>NAD(+)</name>
        <dbReference type="ChEBI" id="CHEBI:57540"/>
    </ligand>
</feature>
<feature type="binding site" evidence="1">
    <location>
        <begin position="264"/>
        <end position="268"/>
    </location>
    <ligand>
        <name>NAD(+)</name>
        <dbReference type="ChEBI" id="CHEBI:57540"/>
    </ligand>
</feature>
<feature type="binding site" evidence="1">
    <location>
        <begin position="274"/>
        <end position="275"/>
    </location>
    <ligand>
        <name>NAD(+)</name>
        <dbReference type="ChEBI" id="CHEBI:57540"/>
    </ligand>
</feature>
<feature type="binding site" evidence="1">
    <location>
        <position position="323"/>
    </location>
    <ligand>
        <name>NAD(+)</name>
        <dbReference type="ChEBI" id="CHEBI:57540"/>
    </ligand>
</feature>
<feature type="binding site" evidence="1">
    <location>
        <position position="493"/>
    </location>
    <ligand>
        <name>NAD(+)</name>
        <dbReference type="ChEBI" id="CHEBI:57540"/>
    </ligand>
</feature>
<reference key="1">
    <citation type="journal article" date="2000" name="DNA Res.">
        <title>Complete genome structure of the nitrogen-fixing symbiotic bacterium Mesorhizobium loti.</title>
        <authorList>
            <person name="Kaneko T."/>
            <person name="Nakamura Y."/>
            <person name="Sato S."/>
            <person name="Asamizu E."/>
            <person name="Kato T."/>
            <person name="Sasamoto S."/>
            <person name="Watanabe A."/>
            <person name="Idesawa K."/>
            <person name="Ishikawa A."/>
            <person name="Kawashima K."/>
            <person name="Kimura T."/>
            <person name="Kishida Y."/>
            <person name="Kiyokawa C."/>
            <person name="Kohara M."/>
            <person name="Matsumoto M."/>
            <person name="Matsuno A."/>
            <person name="Mochizuki Y."/>
            <person name="Nakayama S."/>
            <person name="Nakazaki N."/>
            <person name="Shimpo S."/>
            <person name="Sugimoto M."/>
            <person name="Takeuchi C."/>
            <person name="Yamada M."/>
            <person name="Tabata S."/>
        </authorList>
    </citation>
    <scope>NUCLEOTIDE SEQUENCE [LARGE SCALE GENOMIC DNA]</scope>
    <source>
        <strain>LMG 29417 / CECT 9101 / MAFF 303099</strain>
    </source>
</reference>
<protein>
    <recommendedName>
        <fullName evidence="1">Urocanate hydratase</fullName>
        <shortName evidence="1">Urocanase</shortName>
        <ecNumber evidence="1">4.2.1.49</ecNumber>
    </recommendedName>
    <alternativeName>
        <fullName evidence="1">Imidazolonepropionate hydrolase</fullName>
    </alternativeName>
</protein>
<sequence>MMNNPRHNIREVRAPRGDKLNARYWTTEAPLRMLMNNLDPDVAENPNELVVYGGIGRAARTWNDFDRIVASLKTLGEDETLLVQSGKPVGVFRTHADAPRVLIANSNLVPHWATWEKFNELDKKGLMMYGQMTAGSWIYIGTQGIVQGTYETFVEAGRQHYGGNLKGKWILTGGLGGMGGAQPLAAVMAGACCLAIECNPDSIDFRLRTRYVDEKAETLDEAMEMIERWTKAGEAKSVGLLGNAAEIVPEMFRRGIRPDMVTDQTSAHDPINGYLPKGWTMAEWREKRVSDPKAVEKAARASMRDHVEAMVAFWNAGVPTLDYGNNIRQVAKDEGFENAFAFPGFVPAYIRPLFCRGIGPFRWAALSGDPEDIYKTDAKVRELTPGNTHLHNWLDMARERISFQGLPARICWVGLGDRHRLGLAFNEMVAKGELKAPVVIGRDHLDSGSVASPNRETEAMKDGSDAVSDWPLLNALLNTASGATWVSLHHGGGVGMGFSQHAGMVIVADGTPDAARRLERVLWNDPATGVMRHADAGYDIAIDCAKEHQLNLPGILG</sequence>
<name>HUTU_RHILO</name>
<keyword id="KW-0963">Cytoplasm</keyword>
<keyword id="KW-0369">Histidine metabolism</keyword>
<keyword id="KW-0456">Lyase</keyword>
<keyword id="KW-0520">NAD</keyword>